<dbReference type="EC" id="3.1.3.16"/>
<dbReference type="EMBL" id="CH902623">
    <property type="protein sequence ID" value="EDV30578.1"/>
    <property type="molecule type" value="Genomic_DNA"/>
</dbReference>
<dbReference type="SMR" id="B3MTI8"/>
<dbReference type="FunCoup" id="B3MTI8">
    <property type="interactions" value="91"/>
</dbReference>
<dbReference type="STRING" id="7217.B3MTI8"/>
<dbReference type="EnsemblMetazoa" id="FBtr0127565">
    <property type="protein sequence ID" value="FBpp0126057"/>
    <property type="gene ID" value="FBgn0099859"/>
</dbReference>
<dbReference type="EnsemblMetazoa" id="XM_001964746.4">
    <property type="protein sequence ID" value="XP_001964782.1"/>
    <property type="gene ID" value="LOC6505517"/>
</dbReference>
<dbReference type="GeneID" id="6505517"/>
<dbReference type="KEGG" id="dan:6505517"/>
<dbReference type="CTD" id="43511"/>
<dbReference type="eggNOG" id="KOG1379">
    <property type="taxonomic scope" value="Eukaryota"/>
</dbReference>
<dbReference type="HOGENOM" id="CLU_029404_3_0_1"/>
<dbReference type="InParanoid" id="B3MTI8"/>
<dbReference type="OMA" id="DSWFVSS"/>
<dbReference type="OrthoDB" id="60843at2759"/>
<dbReference type="PhylomeDB" id="B3MTI8"/>
<dbReference type="Proteomes" id="UP000007801">
    <property type="component" value="Unassembled WGS sequence"/>
</dbReference>
<dbReference type="GO" id="GO:0005739">
    <property type="term" value="C:mitochondrion"/>
    <property type="evidence" value="ECO:0007669"/>
    <property type="project" value="TreeGrafter"/>
</dbReference>
<dbReference type="GO" id="GO:0046872">
    <property type="term" value="F:metal ion binding"/>
    <property type="evidence" value="ECO:0007669"/>
    <property type="project" value="UniProtKB-KW"/>
</dbReference>
<dbReference type="GO" id="GO:0004722">
    <property type="term" value="F:protein serine/threonine phosphatase activity"/>
    <property type="evidence" value="ECO:0000250"/>
    <property type="project" value="UniProtKB"/>
</dbReference>
<dbReference type="GO" id="GO:0016311">
    <property type="term" value="P:dephosphorylation"/>
    <property type="evidence" value="ECO:0000250"/>
    <property type="project" value="UniProtKB"/>
</dbReference>
<dbReference type="CDD" id="cd00143">
    <property type="entry name" value="PP2Cc"/>
    <property type="match status" value="1"/>
</dbReference>
<dbReference type="FunFam" id="3.60.40.10:FF:000009">
    <property type="entry name" value="Blast:Protein phosphatase PTC7 homolog"/>
    <property type="match status" value="1"/>
</dbReference>
<dbReference type="Gene3D" id="3.60.40.10">
    <property type="entry name" value="PPM-type phosphatase domain"/>
    <property type="match status" value="1"/>
</dbReference>
<dbReference type="InterPro" id="IPR036457">
    <property type="entry name" value="PPM-type-like_dom_sf"/>
</dbReference>
<dbReference type="InterPro" id="IPR001932">
    <property type="entry name" value="PPM-type_phosphatase-like_dom"/>
</dbReference>
<dbReference type="InterPro" id="IPR039123">
    <property type="entry name" value="PPTC7"/>
</dbReference>
<dbReference type="PANTHER" id="PTHR12320">
    <property type="entry name" value="PROTEIN PHOSPHATASE 2C"/>
    <property type="match status" value="1"/>
</dbReference>
<dbReference type="PANTHER" id="PTHR12320:SF1">
    <property type="entry name" value="PROTEIN PHOSPHATASE PTC7 HOMOLOG"/>
    <property type="match status" value="1"/>
</dbReference>
<dbReference type="Pfam" id="PF13672">
    <property type="entry name" value="PP2C_2"/>
    <property type="match status" value="1"/>
</dbReference>
<dbReference type="SMART" id="SM00331">
    <property type="entry name" value="PP2C_SIG"/>
    <property type="match status" value="1"/>
</dbReference>
<dbReference type="SMART" id="SM00332">
    <property type="entry name" value="PP2Cc"/>
    <property type="match status" value="1"/>
</dbReference>
<dbReference type="SUPFAM" id="SSF81606">
    <property type="entry name" value="PP2C-like"/>
    <property type="match status" value="1"/>
</dbReference>
<dbReference type="PROSITE" id="PS51746">
    <property type="entry name" value="PPM_2"/>
    <property type="match status" value="1"/>
</dbReference>
<reference evidence="6" key="1">
    <citation type="journal article" date="2007" name="Nature">
        <title>Evolution of genes and genomes on the Drosophila phylogeny.</title>
        <authorList>
            <consortium name="Drosophila 12 genomes consortium"/>
        </authorList>
    </citation>
    <scope>NUCLEOTIDE SEQUENCE [LARGE SCALE GENOMIC DNA]</scope>
    <source>
        <strain evidence="6">Tucson 14024-0371.13</strain>
    </source>
</reference>
<name>PTC71_DROAN</name>
<organism>
    <name type="scientific">Drosophila ananassae</name>
    <name type="common">Fruit fly</name>
    <dbReference type="NCBI Taxonomy" id="7217"/>
    <lineage>
        <taxon>Eukaryota</taxon>
        <taxon>Metazoa</taxon>
        <taxon>Ecdysozoa</taxon>
        <taxon>Arthropoda</taxon>
        <taxon>Hexapoda</taxon>
        <taxon>Insecta</taxon>
        <taxon>Pterygota</taxon>
        <taxon>Neoptera</taxon>
        <taxon>Endopterygota</taxon>
        <taxon>Diptera</taxon>
        <taxon>Brachycera</taxon>
        <taxon>Muscomorpha</taxon>
        <taxon>Ephydroidea</taxon>
        <taxon>Drosophilidae</taxon>
        <taxon>Drosophila</taxon>
        <taxon>Sophophora</taxon>
    </lineage>
</organism>
<comment type="catalytic activity">
    <reaction>
        <text>O-phospho-L-seryl-[protein] + H2O = L-seryl-[protein] + phosphate</text>
        <dbReference type="Rhea" id="RHEA:20629"/>
        <dbReference type="Rhea" id="RHEA-COMP:9863"/>
        <dbReference type="Rhea" id="RHEA-COMP:11604"/>
        <dbReference type="ChEBI" id="CHEBI:15377"/>
        <dbReference type="ChEBI" id="CHEBI:29999"/>
        <dbReference type="ChEBI" id="CHEBI:43474"/>
        <dbReference type="ChEBI" id="CHEBI:83421"/>
        <dbReference type="EC" id="3.1.3.16"/>
    </reaction>
</comment>
<comment type="catalytic activity">
    <reaction>
        <text>O-phospho-L-threonyl-[protein] + H2O = L-threonyl-[protein] + phosphate</text>
        <dbReference type="Rhea" id="RHEA:47004"/>
        <dbReference type="Rhea" id="RHEA-COMP:11060"/>
        <dbReference type="Rhea" id="RHEA-COMP:11605"/>
        <dbReference type="ChEBI" id="CHEBI:15377"/>
        <dbReference type="ChEBI" id="CHEBI:30013"/>
        <dbReference type="ChEBI" id="CHEBI:43474"/>
        <dbReference type="ChEBI" id="CHEBI:61977"/>
        <dbReference type="EC" id="3.1.3.16"/>
    </reaction>
</comment>
<comment type="cofactor">
    <cofactor evidence="1 5">
        <name>Mg(2+)</name>
        <dbReference type="ChEBI" id="CHEBI:18420"/>
    </cofactor>
    <cofactor evidence="1 5">
        <name>Mn(2+)</name>
        <dbReference type="ChEBI" id="CHEBI:29035"/>
    </cofactor>
</comment>
<comment type="similarity">
    <text evidence="3">Belongs to the PP2C family.</text>
</comment>
<feature type="chain" id="PRO_0000377395" description="Protein phosphatase PTC7 homolog fig">
    <location>
        <begin position="1"/>
        <end position="332"/>
    </location>
</feature>
<feature type="domain" description="PPM-type phosphatase" evidence="4">
    <location>
        <begin position="70"/>
        <end position="325"/>
    </location>
</feature>
<feature type="binding site" evidence="1">
    <location>
        <position position="102"/>
    </location>
    <ligand>
        <name>Mn(2+)</name>
        <dbReference type="ChEBI" id="CHEBI:29035"/>
        <label>1</label>
    </ligand>
</feature>
<feature type="binding site" evidence="1">
    <location>
        <position position="102"/>
    </location>
    <ligand>
        <name>Mn(2+)</name>
        <dbReference type="ChEBI" id="CHEBI:29035"/>
        <label>2</label>
    </ligand>
</feature>
<feature type="binding site" evidence="1">
    <location>
        <position position="103"/>
    </location>
    <ligand>
        <name>Mn(2+)</name>
        <dbReference type="ChEBI" id="CHEBI:29035"/>
        <label>1</label>
    </ligand>
</feature>
<feature type="binding site" evidence="1">
    <location>
        <position position="247"/>
    </location>
    <ligand>
        <name>Mn(2+)</name>
        <dbReference type="ChEBI" id="CHEBI:29035"/>
        <label>2</label>
    </ligand>
</feature>
<keyword id="KW-0378">Hydrolase</keyword>
<keyword id="KW-0460">Magnesium</keyword>
<keyword id="KW-0464">Manganese</keyword>
<keyword id="KW-0479">Metal-binding</keyword>
<keyword id="KW-0904">Protein phosphatase</keyword>
<keyword id="KW-1185">Reference proteome</keyword>
<evidence type="ECO:0000250" key="1">
    <source>
        <dbReference type="UniProtKB" id="P35813"/>
    </source>
</evidence>
<evidence type="ECO:0000250" key="2">
    <source>
        <dbReference type="UniProtKB" id="Q9VAH4"/>
    </source>
</evidence>
<evidence type="ECO:0000255" key="3"/>
<evidence type="ECO:0000255" key="4">
    <source>
        <dbReference type="PROSITE-ProRule" id="PRU01082"/>
    </source>
</evidence>
<evidence type="ECO:0000305" key="5"/>
<evidence type="ECO:0000312" key="6">
    <source>
        <dbReference type="EMBL" id="EDV30578.1"/>
    </source>
</evidence>
<accession>B3MTI8</accession>
<gene>
    <name evidence="2" type="primary">fig</name>
    <name type="ORF">GF22865</name>
</gene>
<protein>
    <recommendedName>
        <fullName>Protein phosphatase PTC7 homolog fig</fullName>
    </recommendedName>
    <alternativeName>
        <fullName>Fos intronic gene protein</fullName>
        <ecNumber>3.1.3.16</ecNumber>
    </alternativeName>
</protein>
<sequence>MKPTMMSNWPGFINRFVRQVRHPLDFRRPYRITGFPDNLSPLGYFGQTKQYARAAQEPYLVTVVQGRSKKPCSPRERANRRFGEDSWFVSSTPRAEVLGVADGVGGWRDMGVDAGRFAKELMGCCCGRSEQEDFDGRNPRSLLVSSYQELKDRDDPVVGSSTACVVAMHRRDLTLYTANLGDSGFMVLRNGRVMHRSEEQTHDFNTPFQLTVAPSHKLDSVHCDGPEKAAVSRHPLAPGDLVLLATDGLFDNLPESMLLEMLRKFHGVRDEKELQDAANQVVEKARELSMNASFPSPFAVKARANNISYSGGGKPDDITLILASVEVPKVHR</sequence>
<proteinExistence type="inferred from homology"/>